<comment type="function">
    <text evidence="2 3 5">Involved in the synthesis of the type III secretion system (T3SS), also called injectisome, which is used to inject bacterial effector proteins into eukaryotic host cells (PubMed:10085046, PubMed:11717255). Pilot protein that is required for the proper localization of the secretin MxiD/SctC in the outer membrane (PubMed:11717255). Also influences both MxiD/SctC multimerization and stability (PubMed:11717255). Required for both Ipa translocation and tissue culture cell invasion (PubMed:10085046). Binds lipids (PubMed:15775974).</text>
</comment>
<comment type="subunit">
    <text evidence="3 5 6">Monomer (PubMed:15775974). Interacts with the secretin MxiD/SctC (PubMed:11717255, PubMed:15775974, PubMed:18940609).</text>
</comment>
<comment type="interaction">
    <interactant intactId="EBI-15735345">
        <id>P0A1X2</id>
    </interactant>
    <interactant intactId="EBI-15735324">
        <id>Q04641</id>
        <label>sctC</label>
    </interactant>
    <organismsDiffer>false</organismsDiffer>
    <experiments>3</experiments>
</comment>
<comment type="subcellular location">
    <subcellularLocation>
        <location evidence="2">Cell outer membrane</location>
        <topology evidence="2 4">Lipid-anchor</topology>
        <orientation evidence="2">Periplasmic side</orientation>
    </subcellularLocation>
</comment>
<comment type="disruption phenotype">
    <text evidence="2">Inactivation of the gene blocks the Ipa invasin secretory pathway and severely attenuates virulence.</text>
</comment>
<comment type="similarity">
    <text evidence="10">Belongs to the MxiM family.</text>
</comment>
<comment type="sequence caution" evidence="10">
    <conflict type="erroneous initiation">
        <sequence resource="EMBL-CDS" id="AAK18462"/>
    </conflict>
    <text>Extended N-terminus.</text>
</comment>
<geneLocation type="plasmid">
    <name>pWR100</name>
</geneLocation>
<geneLocation type="plasmid">
    <name>pWR501</name>
</geneLocation>
<geneLocation type="plasmid">
    <name>pINV_F6_M1382</name>
</geneLocation>
<geneLocation type="plasmid">
    <name>pCP301</name>
</geneLocation>
<protein>
    <recommendedName>
        <fullName evidence="10">Type 3 secretion system pilotin</fullName>
    </recommendedName>
    <alternativeName>
        <fullName>Lipoprotein MxiM</fullName>
    </alternativeName>
    <alternativeName>
        <fullName evidence="7">MxiD pilot</fullName>
    </alternativeName>
    <alternativeName>
        <fullName evidence="9">Secretin pilot protein</fullName>
    </alternativeName>
</protein>
<evidence type="ECO:0000255" key="1">
    <source>
        <dbReference type="PROSITE-ProRule" id="PRU00303"/>
    </source>
</evidence>
<evidence type="ECO:0000269" key="2">
    <source>
    </source>
</evidence>
<evidence type="ECO:0000269" key="3">
    <source>
    </source>
</evidence>
<evidence type="ECO:0000269" key="4">
    <source>
    </source>
</evidence>
<evidence type="ECO:0000269" key="5">
    <source>
    </source>
</evidence>
<evidence type="ECO:0000269" key="6">
    <source>
    </source>
</evidence>
<evidence type="ECO:0000303" key="7">
    <source>
    </source>
</evidence>
<evidence type="ECO:0000303" key="8">
    <source>
    </source>
</evidence>
<evidence type="ECO:0000303" key="9">
    <source>
    </source>
</evidence>
<evidence type="ECO:0000305" key="10"/>
<evidence type="ECO:0007744" key="11">
    <source>
        <dbReference type="PDB" id="1Y9L"/>
    </source>
</evidence>
<evidence type="ECO:0007744" key="12">
    <source>
        <dbReference type="PDB" id="1Y9T"/>
    </source>
</evidence>
<evidence type="ECO:0007744" key="13">
    <source>
        <dbReference type="PDB" id="2JW1"/>
    </source>
</evidence>
<evidence type="ECO:0007829" key="14">
    <source>
        <dbReference type="PDB" id="1Y9L"/>
    </source>
</evidence>
<accession>P0A1X2</accession>
<accession>Q06083</accession>
<accession>Q9AFS1</accession>
<organism>
    <name type="scientific">Shigella flexneri</name>
    <dbReference type="NCBI Taxonomy" id="623"/>
    <lineage>
        <taxon>Bacteria</taxon>
        <taxon>Pseudomonadati</taxon>
        <taxon>Pseudomonadota</taxon>
        <taxon>Gammaproteobacteria</taxon>
        <taxon>Enterobacterales</taxon>
        <taxon>Enterobacteriaceae</taxon>
        <taxon>Shigella</taxon>
    </lineage>
</organism>
<keyword id="KW-0002">3D-structure</keyword>
<keyword id="KW-0998">Cell outer membrane</keyword>
<keyword id="KW-0449">Lipoprotein</keyword>
<keyword id="KW-0472">Membrane</keyword>
<keyword id="KW-0564">Palmitate</keyword>
<keyword id="KW-0614">Plasmid</keyword>
<keyword id="KW-1185">Reference proteome</keyword>
<keyword id="KW-0732">Signal</keyword>
<keyword id="KW-0843">Virulence</keyword>
<name>SCTG_SHIFL</name>
<proteinExistence type="evidence at protein level"/>
<gene>
    <name evidence="8" type="primary">mxiM</name>
    <name evidence="10" type="synonym">sctG</name>
    <name type="ordered locus">CP0143</name>
</gene>
<sequence length="142" mass="15853">MIRHGSNKLKIFILSILLLTLSGCALKSSSNSEKEWHIVPVSKDYFSIPNDLLWSFNTTNKSINVYSKCISGKAVYSFNAGKFMGNFNVKEVDGCFMDAQKIAIDKLFSMLKDGVVLKGNKINDTILIEKDGEVKLKLIRGI</sequence>
<feature type="signal peptide" evidence="1">
    <location>
        <begin position="1"/>
        <end position="23"/>
    </location>
</feature>
<feature type="chain" id="PRO_0000018225" description="Type 3 secretion system pilotin" evidence="1">
    <location>
        <begin position="24"/>
        <end position="142"/>
    </location>
</feature>
<feature type="lipid moiety-binding region" description="N-palmitoyl cysteine" evidence="1">
    <location>
        <position position="24"/>
    </location>
</feature>
<feature type="lipid moiety-binding region" description="S-diacylglycerol cysteine" evidence="1">
    <location>
        <position position="24"/>
    </location>
</feature>
<feature type="strand" evidence="14">
    <location>
        <begin position="34"/>
        <end position="40"/>
    </location>
</feature>
<feature type="helix" evidence="14">
    <location>
        <begin position="43"/>
        <end position="45"/>
    </location>
</feature>
<feature type="strand" evidence="14">
    <location>
        <begin position="53"/>
        <end position="56"/>
    </location>
</feature>
<feature type="turn" evidence="14">
    <location>
        <begin position="58"/>
        <end position="60"/>
    </location>
</feature>
<feature type="strand" evidence="14">
    <location>
        <begin position="63"/>
        <end position="66"/>
    </location>
</feature>
<feature type="strand" evidence="14">
    <location>
        <begin position="68"/>
        <end position="73"/>
    </location>
</feature>
<feature type="strand" evidence="14">
    <location>
        <begin position="75"/>
        <end position="79"/>
    </location>
</feature>
<feature type="strand" evidence="14">
    <location>
        <begin position="82"/>
        <end position="86"/>
    </location>
</feature>
<feature type="helix" evidence="14">
    <location>
        <begin position="98"/>
        <end position="113"/>
    </location>
</feature>
<feature type="strand" evidence="14">
    <location>
        <begin position="115"/>
        <end position="118"/>
    </location>
</feature>
<feature type="strand" evidence="14">
    <location>
        <begin position="121"/>
        <end position="124"/>
    </location>
</feature>
<feature type="strand" evidence="14">
    <location>
        <begin position="126"/>
        <end position="130"/>
    </location>
</feature>
<feature type="strand" evidence="14">
    <location>
        <begin position="133"/>
        <end position="140"/>
    </location>
</feature>
<reference key="1">
    <citation type="journal article" date="1992" name="J. Bacteriol.">
        <title>MxiJ, a lipoprotein involved in secretion of Shigella Ipa invasins, is homologous to YscJ, a secretion factor of the Yersinia Yop proteins.</title>
        <authorList>
            <person name="Allaoui A."/>
            <person name="Sansonetti P.J."/>
            <person name="Parsot C."/>
        </authorList>
    </citation>
    <scope>NUCLEOTIDE SEQUENCE [GENOMIC DNA]</scope>
    <scope>SUBCELLULAR LOCATION</scope>
    <source>
        <strain>M90T / Serotype 5a</strain>
        <plasmid>pWR100</plasmid>
    </source>
</reference>
<reference key="2">
    <citation type="journal article" date="2000" name="Mol. Microbiol.">
        <title>The virulence plasmid pWR100 and the repertoire of proteins secreted by the type III secretion apparatus of Shigella flexneri.</title>
        <authorList>
            <person name="Buchrieser C."/>
            <person name="Glaser P."/>
            <person name="Rusniok C."/>
            <person name="Nedjari H."/>
            <person name="d'Hauteville H."/>
            <person name="Kunst F."/>
            <person name="Sansonetti P.J."/>
            <person name="Parsot C."/>
        </authorList>
    </citation>
    <scope>NUCLEOTIDE SEQUENCE [GENOMIC DNA]</scope>
    <source>
        <strain>M90T / Serotype 5a</strain>
        <plasmid>pWR100</plasmid>
    </source>
</reference>
<reference key="3">
    <citation type="journal article" date="2001" name="Infect. Immun.">
        <title>Complete DNA sequence and analysis of the large virulence plasmid of Shigella flexneri.</title>
        <authorList>
            <person name="Venkatesan M.M."/>
            <person name="Goldberg M.B."/>
            <person name="Rose D.J."/>
            <person name="Grotbeck E.J."/>
            <person name="Burland V."/>
            <person name="Blattner F.R."/>
        </authorList>
    </citation>
    <scope>NUCLEOTIDE SEQUENCE [GENOMIC DNA]</scope>
    <source>
        <strain>M90T / Serotype 5a</strain>
        <plasmid>pWR501</plasmid>
    </source>
</reference>
<reference key="4">
    <citation type="journal article" date="2003" name="Infect. Immun.">
        <title>Comparison of two major forms of the Shigella virulence plasmid pINV: positive selection is a major force driving the divergence.</title>
        <authorList>
            <person name="Lan R."/>
            <person name="Stevenson G."/>
            <person name="Reeves P.R."/>
        </authorList>
    </citation>
    <scope>NUCLEOTIDE SEQUENCE [GENOMIC DNA]</scope>
    <source>
        <strain>M1382 / Serotype 6</strain>
        <plasmid>pINV_F6_M1382</plasmid>
    </source>
</reference>
<reference key="5">
    <citation type="journal article" date="2002" name="Nucleic Acids Res.">
        <title>Genome sequence of Shigella flexneri 2a: insights into pathogenicity through comparison with genomes of Escherichia coli K12 and O157.</title>
        <authorList>
            <person name="Jin Q."/>
            <person name="Yuan Z."/>
            <person name="Xu J."/>
            <person name="Wang Y."/>
            <person name="Shen Y."/>
            <person name="Lu W."/>
            <person name="Wang J."/>
            <person name="Liu H."/>
            <person name="Yang J."/>
            <person name="Yang F."/>
            <person name="Zhang X."/>
            <person name="Zhang J."/>
            <person name="Yang G."/>
            <person name="Wu H."/>
            <person name="Qu D."/>
            <person name="Dong J."/>
            <person name="Sun L."/>
            <person name="Xue Y."/>
            <person name="Zhao A."/>
            <person name="Gao Y."/>
            <person name="Zhu J."/>
            <person name="Kan B."/>
            <person name="Ding K."/>
            <person name="Chen S."/>
            <person name="Cheng H."/>
            <person name="Yao Z."/>
            <person name="He B."/>
            <person name="Chen R."/>
            <person name="Ma D."/>
            <person name="Qiang B."/>
            <person name="Wen Y."/>
            <person name="Hou Y."/>
            <person name="Yu J."/>
        </authorList>
    </citation>
    <scope>NUCLEOTIDE SEQUENCE [LARGE SCALE GENOMIC DNA]</scope>
    <source>
        <strain>301 / Serotype 2a</strain>
        <plasmid>pCP301</plasmid>
    </source>
</reference>
<reference key="6">
    <citation type="journal article" date="1999" name="Infect. Immun.">
        <title>The mxi-Spa type III secretory pathway of Shigella flexneri requires an outer membrane lipoprotein, MxiM, for invasin translocation.</title>
        <authorList>
            <person name="Schuch R."/>
            <person name="Maurelli A.T."/>
        </authorList>
    </citation>
    <scope>FUNCTION</scope>
    <scope>SUBCELLULAR LOCATION</scope>
    <scope>DISRUPTION PHENOTYPE</scope>
    <source>
        <strain>ATCC 700930 / 2457T / Serotype 2a</strain>
    </source>
</reference>
<reference key="7">
    <citation type="journal article" date="2001" name="J. Bacteriol.">
        <title>MxiM and MxiJ, base elements of the Mxi-Spa type III secretion system of Shigella, interact with and stabilize the MxiD secretin in the cell envelope.</title>
        <authorList>
            <person name="Schuch R."/>
            <person name="Maurelli A.T."/>
        </authorList>
    </citation>
    <scope>FUNCTION</scope>
    <scope>INTERACTION WITH MXID/SCTC</scope>
    <source>
        <strain>ATCC 700930 / 2457T / Serotype 2a</strain>
    </source>
</reference>
<reference evidence="11 12" key="8">
    <citation type="journal article" date="2005" name="EMBO J.">
        <title>Structure and biochemical analysis of a secretin pilot protein.</title>
        <authorList>
            <person name="Lario P.I."/>
            <person name="Pfuetzner R.A."/>
            <person name="Frey E.A."/>
            <person name="Creagh L."/>
            <person name="Haynes C."/>
            <person name="Maurelli A.T."/>
            <person name="Strynadka N.C."/>
        </authorList>
    </citation>
    <scope>X-RAY CRYSTALLOGRAPHY (1.50 ANGSTROMS) OF 28-142</scope>
    <scope>FUNCTION</scope>
    <scope>SUBUNIT</scope>
    <scope>INTERACTION WITH MXID/SCTC</scope>
</reference>
<reference evidence="13" key="9">
    <citation type="journal article" date="2008" name="Structure">
        <title>Structural characterization of the type-III pilot-secretin complex from Shigella flexneri.</title>
        <authorList>
            <person name="Okon M."/>
            <person name="Moraes T.F."/>
            <person name="Lario P.I."/>
            <person name="Creagh A.L."/>
            <person name="Haynes C.A."/>
            <person name="Strynadka N.C."/>
            <person name="McIntosh L.P."/>
        </authorList>
    </citation>
    <scope>STRUCTURE BY NMR OF 28-142 IN COMPLEX WITH MXID/SCTC</scope>
    <scope>SUBUNIT</scope>
</reference>
<dbReference type="EMBL" id="M98391">
    <property type="protein sequence ID" value="AAA26534.1"/>
    <property type="molecule type" value="Genomic_DNA"/>
</dbReference>
<dbReference type="EMBL" id="AL391753">
    <property type="protein sequence ID" value="CAC05818.1"/>
    <property type="molecule type" value="Genomic_DNA"/>
</dbReference>
<dbReference type="EMBL" id="AF348706">
    <property type="protein sequence ID" value="AAK18462.1"/>
    <property type="status" value="ALT_INIT"/>
    <property type="molecule type" value="Genomic_DNA"/>
</dbReference>
<dbReference type="EMBL" id="AY206439">
    <property type="protein sequence ID" value="AAP79006.1"/>
    <property type="molecule type" value="Genomic_DNA"/>
</dbReference>
<dbReference type="EMBL" id="AF386526">
    <property type="protein sequence ID" value="AAL72325.2"/>
    <property type="molecule type" value="Genomic_DNA"/>
</dbReference>
<dbReference type="PIR" id="E45271">
    <property type="entry name" value="E45271"/>
</dbReference>
<dbReference type="RefSeq" id="NP_858276.2">
    <property type="nucleotide sequence ID" value="NC_004851.1"/>
</dbReference>
<dbReference type="RefSeq" id="WP_001346200.1">
    <property type="nucleotide sequence ID" value="NZ_WPGS01000043.1"/>
</dbReference>
<dbReference type="RefSeq" id="YP_009062500.1">
    <property type="nucleotide sequence ID" value="NC_024996.1"/>
</dbReference>
<dbReference type="PDB" id="1Y9L">
    <property type="method" value="X-ray"/>
    <property type="resolution" value="1.50 A"/>
    <property type="chains" value="A=28-142"/>
</dbReference>
<dbReference type="PDB" id="1Y9T">
    <property type="method" value="X-ray"/>
    <property type="resolution" value="1.87 A"/>
    <property type="chains" value="A=28-142"/>
</dbReference>
<dbReference type="PDB" id="2JW1">
    <property type="method" value="NMR"/>
    <property type="chains" value="A=28-142"/>
</dbReference>
<dbReference type="PDBsum" id="1Y9L"/>
<dbReference type="PDBsum" id="1Y9T"/>
<dbReference type="PDBsum" id="2JW1"/>
<dbReference type="BMRB" id="P0A1X2"/>
<dbReference type="SMR" id="P0A1X2"/>
<dbReference type="DIP" id="DIP-46243N"/>
<dbReference type="IntAct" id="P0A1X2">
    <property type="interactions" value="1"/>
</dbReference>
<dbReference type="DrugBank" id="DB04199">
    <property type="generic name" value="1-Monohexanoyl-2-Hydroxy-Sn-Glycero-3-Phosphate"/>
</dbReference>
<dbReference type="PaxDb" id="198214-CP0143"/>
<dbReference type="GeneID" id="1238028"/>
<dbReference type="KEGG" id="sfl:CP0143"/>
<dbReference type="PATRIC" id="fig|623.157.peg.5377"/>
<dbReference type="HOGENOM" id="CLU_1814512_0_0_6"/>
<dbReference type="EvolutionaryTrace" id="P0A1X2"/>
<dbReference type="Proteomes" id="UP000001006">
    <property type="component" value="Plasmid pCP301"/>
</dbReference>
<dbReference type="GO" id="GO:0009279">
    <property type="term" value="C:cell outer membrane"/>
    <property type="evidence" value="ECO:0007669"/>
    <property type="project" value="UniProtKB-SubCell"/>
</dbReference>
<dbReference type="CDD" id="cd14493">
    <property type="entry name" value="lipocalin_MxiM"/>
    <property type="match status" value="1"/>
</dbReference>
<dbReference type="Gene3D" id="2.40.128.230">
    <property type="entry name" value="Pilot protein MxiM"/>
    <property type="match status" value="1"/>
</dbReference>
<dbReference type="InterPro" id="IPR021546">
    <property type="entry name" value="MxiM"/>
</dbReference>
<dbReference type="InterPro" id="IPR038517">
    <property type="entry name" value="MxiM_sf"/>
</dbReference>
<dbReference type="Pfam" id="PF11441">
    <property type="entry name" value="MxiM"/>
    <property type="match status" value="1"/>
</dbReference>
<dbReference type="PROSITE" id="PS51257">
    <property type="entry name" value="PROKAR_LIPOPROTEIN"/>
    <property type="match status" value="1"/>
</dbReference>